<proteinExistence type="evidence at transcript level"/>
<protein>
    <recommendedName>
        <fullName>Interleukin-1 receptor antagonist protein</fullName>
        <shortName>IL-1RN</shortName>
        <shortName>IL-1ra</shortName>
        <shortName>IRAP</shortName>
    </recommendedName>
    <alternativeName>
        <fullName>IL1 inhibitor</fullName>
    </alternativeName>
</protein>
<reference key="1">
    <citation type="journal article" date="1991" name="Proc. Natl. Acad. Sci. U.S.A.">
        <title>Interleukin 1 receptor antagonist is a member of the interleukin 1 gene family: evolution of a cytokine control mechanism.</title>
        <authorList>
            <person name="Eisenberg S.P."/>
            <person name="Brewer M.T."/>
            <person name="Verderber E."/>
            <person name="Heimdal P."/>
            <person name="Brandhuber B.J."/>
            <person name="Thompson R.C."/>
        </authorList>
    </citation>
    <scope>NUCLEOTIDE SEQUENCE [GENOMIC DNA]</scope>
</reference>
<reference key="2">
    <citation type="journal article" date="2004" name="Genome Res.">
        <title>The status, quality, and expansion of the NIH full-length cDNA project: the Mammalian Gene Collection (MGC).</title>
        <authorList>
            <consortium name="The MGC Project Team"/>
        </authorList>
    </citation>
    <scope>NUCLEOTIDE SEQUENCE [LARGE SCALE MRNA]</scope>
    <source>
        <tissue>Lung</tissue>
    </source>
</reference>
<organism>
    <name type="scientific">Rattus norvegicus</name>
    <name type="common">Rat</name>
    <dbReference type="NCBI Taxonomy" id="10116"/>
    <lineage>
        <taxon>Eukaryota</taxon>
        <taxon>Metazoa</taxon>
        <taxon>Chordata</taxon>
        <taxon>Craniata</taxon>
        <taxon>Vertebrata</taxon>
        <taxon>Euteleostomi</taxon>
        <taxon>Mammalia</taxon>
        <taxon>Eutheria</taxon>
        <taxon>Euarchontoglires</taxon>
        <taxon>Glires</taxon>
        <taxon>Rodentia</taxon>
        <taxon>Myomorpha</taxon>
        <taxon>Muroidea</taxon>
        <taxon>Muridae</taxon>
        <taxon>Murinae</taxon>
        <taxon>Rattus</taxon>
    </lineage>
</organism>
<gene>
    <name type="primary">Il1rn</name>
    <name type="synonym">Il-1ra</name>
</gene>
<evidence type="ECO:0000250" key="1"/>
<evidence type="ECO:0000250" key="2">
    <source>
        <dbReference type="UniProtKB" id="P18510"/>
    </source>
</evidence>
<evidence type="ECO:0000250" key="3">
    <source>
        <dbReference type="UniProtKB" id="P25085"/>
    </source>
</evidence>
<evidence type="ECO:0000255" key="4"/>
<evidence type="ECO:0000305" key="5"/>
<name>IL1RA_RAT</name>
<accession>P25086</accession>
<keyword id="KW-1015">Disulfide bond</keyword>
<keyword id="KW-0325">Glycoprotein</keyword>
<keyword id="KW-1185">Reference proteome</keyword>
<keyword id="KW-0964">Secreted</keyword>
<keyword id="KW-0732">Signal</keyword>
<dbReference type="EMBL" id="M63101">
    <property type="protein sequence ID" value="AAA41434.1"/>
    <property type="molecule type" value="Genomic_DNA"/>
</dbReference>
<dbReference type="EMBL" id="BC070930">
    <property type="protein sequence ID" value="AAH70930.1"/>
    <property type="molecule type" value="mRNA"/>
</dbReference>
<dbReference type="PIR" id="C40956">
    <property type="entry name" value="C40956"/>
</dbReference>
<dbReference type="RefSeq" id="NP_071530.1">
    <property type="nucleotide sequence ID" value="NM_022194.2"/>
</dbReference>
<dbReference type="SMR" id="P25086"/>
<dbReference type="FunCoup" id="P25086">
    <property type="interactions" value="24"/>
</dbReference>
<dbReference type="STRING" id="10116.ENSRNOP00000007949"/>
<dbReference type="GlyCosmos" id="P25086">
    <property type="glycosylation" value="1 site, No reported glycans"/>
</dbReference>
<dbReference type="GlyGen" id="P25086">
    <property type="glycosylation" value="2 sites"/>
</dbReference>
<dbReference type="PhosphoSitePlus" id="P25086"/>
<dbReference type="PaxDb" id="10116-ENSRNOP00000007949"/>
<dbReference type="GeneID" id="60582"/>
<dbReference type="KEGG" id="rno:60582"/>
<dbReference type="UCSC" id="RGD:621159">
    <property type="organism name" value="rat"/>
</dbReference>
<dbReference type="AGR" id="RGD:621159"/>
<dbReference type="CTD" id="3557"/>
<dbReference type="RGD" id="621159">
    <property type="gene designation" value="Il1rn"/>
</dbReference>
<dbReference type="eggNOG" id="ENOG502S5F0">
    <property type="taxonomic scope" value="Eukaryota"/>
</dbReference>
<dbReference type="HOGENOM" id="CLU_095373_2_0_1"/>
<dbReference type="InParanoid" id="P25086"/>
<dbReference type="OrthoDB" id="16531at9989"/>
<dbReference type="PhylomeDB" id="P25086"/>
<dbReference type="TreeFam" id="TF300203"/>
<dbReference type="Reactome" id="R-RNO-9020702">
    <property type="pathway name" value="Interleukin-1 signaling"/>
</dbReference>
<dbReference type="PRO" id="PR:P25086"/>
<dbReference type="Proteomes" id="UP000002494">
    <property type="component" value="Unplaced"/>
</dbReference>
<dbReference type="GO" id="GO:0005576">
    <property type="term" value="C:extracellular region"/>
    <property type="evidence" value="ECO:0000266"/>
    <property type="project" value="RGD"/>
</dbReference>
<dbReference type="GO" id="GO:0005615">
    <property type="term" value="C:extracellular space"/>
    <property type="evidence" value="ECO:0000314"/>
    <property type="project" value="RGD"/>
</dbReference>
<dbReference type="GO" id="GO:0031982">
    <property type="term" value="C:vesicle"/>
    <property type="evidence" value="ECO:0000266"/>
    <property type="project" value="RGD"/>
</dbReference>
<dbReference type="GO" id="GO:0005125">
    <property type="term" value="F:cytokine activity"/>
    <property type="evidence" value="ECO:0007669"/>
    <property type="project" value="InterPro"/>
</dbReference>
<dbReference type="GO" id="GO:0005152">
    <property type="term" value="F:interleukin-1 receptor antagonist activity"/>
    <property type="evidence" value="ECO:0000266"/>
    <property type="project" value="RGD"/>
</dbReference>
<dbReference type="GO" id="GO:0005149">
    <property type="term" value="F:interleukin-1 receptor binding"/>
    <property type="evidence" value="ECO:0000314"/>
    <property type="project" value="RGD"/>
</dbReference>
<dbReference type="GO" id="GO:0045352">
    <property type="term" value="F:interleukin-1 type I receptor antagonist activity"/>
    <property type="evidence" value="ECO:0000266"/>
    <property type="project" value="RGD"/>
</dbReference>
<dbReference type="GO" id="GO:0045353">
    <property type="term" value="F:interleukin-1 type II receptor antagonist activity"/>
    <property type="evidence" value="ECO:0000266"/>
    <property type="project" value="RGD"/>
</dbReference>
<dbReference type="GO" id="GO:0005150">
    <property type="term" value="F:interleukin-1, type I receptor binding"/>
    <property type="evidence" value="ECO:0000266"/>
    <property type="project" value="RGD"/>
</dbReference>
<dbReference type="GO" id="GO:0005151">
    <property type="term" value="F:interleukin-1, type II receptor binding"/>
    <property type="evidence" value="ECO:0000266"/>
    <property type="project" value="RGD"/>
</dbReference>
<dbReference type="GO" id="GO:0019752">
    <property type="term" value="P:carboxylic acid metabolic process"/>
    <property type="evidence" value="ECO:0000270"/>
    <property type="project" value="RGD"/>
</dbReference>
<dbReference type="GO" id="GO:0071874">
    <property type="term" value="P:cellular response to norepinephrine stimulus"/>
    <property type="evidence" value="ECO:0000270"/>
    <property type="project" value="RGD"/>
</dbReference>
<dbReference type="GO" id="GO:0002439">
    <property type="term" value="P:chronic inflammatory response to antigenic stimulus"/>
    <property type="evidence" value="ECO:0000270"/>
    <property type="project" value="RGD"/>
</dbReference>
<dbReference type="GO" id="GO:0007565">
    <property type="term" value="P:female pregnancy"/>
    <property type="evidence" value="ECO:0000270"/>
    <property type="project" value="RGD"/>
</dbReference>
<dbReference type="GO" id="GO:0001660">
    <property type="term" value="P:fever generation"/>
    <property type="evidence" value="ECO:0000315"/>
    <property type="project" value="RGD"/>
</dbReference>
<dbReference type="GO" id="GO:0006955">
    <property type="term" value="P:immune response"/>
    <property type="evidence" value="ECO:0000318"/>
    <property type="project" value="GO_Central"/>
</dbReference>
<dbReference type="GO" id="GO:0006954">
    <property type="term" value="P:inflammatory response"/>
    <property type="evidence" value="ECO:0000318"/>
    <property type="project" value="GO_Central"/>
</dbReference>
<dbReference type="GO" id="GO:0030073">
    <property type="term" value="P:insulin secretion"/>
    <property type="evidence" value="ECO:0000266"/>
    <property type="project" value="RGD"/>
</dbReference>
<dbReference type="GO" id="GO:0006629">
    <property type="term" value="P:lipid metabolic process"/>
    <property type="evidence" value="ECO:0000266"/>
    <property type="project" value="RGD"/>
</dbReference>
<dbReference type="GO" id="GO:0007613">
    <property type="term" value="P:memory"/>
    <property type="evidence" value="ECO:0000315"/>
    <property type="project" value="RGD"/>
</dbReference>
<dbReference type="GO" id="GO:0043066">
    <property type="term" value="P:negative regulation of apoptotic process"/>
    <property type="evidence" value="ECO:0000315"/>
    <property type="project" value="RGD"/>
</dbReference>
<dbReference type="GO" id="GO:0030336">
    <property type="term" value="P:negative regulation of cell migration"/>
    <property type="evidence" value="ECO:0000314"/>
    <property type="project" value="RGD"/>
</dbReference>
<dbReference type="GO" id="GO:0014050">
    <property type="term" value="P:negative regulation of glutamate secretion"/>
    <property type="evidence" value="ECO:0000315"/>
    <property type="project" value="RGD"/>
</dbReference>
<dbReference type="GO" id="GO:0034115">
    <property type="term" value="P:negative regulation of heterotypic cell-cell adhesion"/>
    <property type="evidence" value="ECO:0000266"/>
    <property type="project" value="RGD"/>
</dbReference>
<dbReference type="GO" id="GO:2000660">
    <property type="term" value="P:negative regulation of interleukin-1-mediated signaling pathway"/>
    <property type="evidence" value="ECO:0000266"/>
    <property type="project" value="RGD"/>
</dbReference>
<dbReference type="GO" id="GO:0045837">
    <property type="term" value="P:negative regulation of membrane potential"/>
    <property type="evidence" value="ECO:0000314"/>
    <property type="project" value="RGD"/>
</dbReference>
<dbReference type="GO" id="GO:0009968">
    <property type="term" value="P:negative regulation of signal transduction"/>
    <property type="evidence" value="ECO:0000304"/>
    <property type="project" value="RGD"/>
</dbReference>
<dbReference type="GO" id="GO:0014823">
    <property type="term" value="P:response to activity"/>
    <property type="evidence" value="ECO:0000270"/>
    <property type="project" value="RGD"/>
</dbReference>
<dbReference type="GO" id="GO:0051384">
    <property type="term" value="P:response to glucocorticoid"/>
    <property type="evidence" value="ECO:0000266"/>
    <property type="project" value="RGD"/>
</dbReference>
<dbReference type="GO" id="GO:0070555">
    <property type="term" value="P:response to interleukin-1"/>
    <property type="evidence" value="ECO:0000270"/>
    <property type="project" value="RGD"/>
</dbReference>
<dbReference type="GO" id="GO:0070670">
    <property type="term" value="P:response to interleukin-4"/>
    <property type="evidence" value="ECO:0000270"/>
    <property type="project" value="RGD"/>
</dbReference>
<dbReference type="GO" id="GO:0032496">
    <property type="term" value="P:response to lipopolysaccharide"/>
    <property type="evidence" value="ECO:0000270"/>
    <property type="project" value="RGD"/>
</dbReference>
<dbReference type="GO" id="GO:0042594">
    <property type="term" value="P:response to starvation"/>
    <property type="evidence" value="ECO:0000270"/>
    <property type="project" value="RGD"/>
</dbReference>
<dbReference type="GO" id="GO:0009410">
    <property type="term" value="P:response to xenobiotic stimulus"/>
    <property type="evidence" value="ECO:0000270"/>
    <property type="project" value="RGD"/>
</dbReference>
<dbReference type="FunFam" id="2.80.10.50:FF:000013">
    <property type="entry name" value="Interleukin-1"/>
    <property type="match status" value="1"/>
</dbReference>
<dbReference type="Gene3D" id="2.80.10.50">
    <property type="match status" value="1"/>
</dbReference>
<dbReference type="InterPro" id="IPR020877">
    <property type="entry name" value="IL-1_CS"/>
</dbReference>
<dbReference type="InterPro" id="IPR000975">
    <property type="entry name" value="IL-1_fam"/>
</dbReference>
<dbReference type="InterPro" id="IPR003297">
    <property type="entry name" value="IL-1RA/IL-36"/>
</dbReference>
<dbReference type="InterPro" id="IPR008996">
    <property type="entry name" value="IL1/FGF"/>
</dbReference>
<dbReference type="PANTHER" id="PTHR10078">
    <property type="entry name" value="INTERLEUKIN-1 FAMILY MEMBER"/>
    <property type="match status" value="1"/>
</dbReference>
<dbReference type="PANTHER" id="PTHR10078:SF28">
    <property type="entry name" value="INTERLEUKIN-1 RECEPTOR ANTAGONIST PROTEIN"/>
    <property type="match status" value="1"/>
</dbReference>
<dbReference type="Pfam" id="PF00340">
    <property type="entry name" value="IL1"/>
    <property type="match status" value="1"/>
</dbReference>
<dbReference type="PRINTS" id="PR00264">
    <property type="entry name" value="INTERLEUKIN1"/>
</dbReference>
<dbReference type="PRINTS" id="PR01360">
    <property type="entry name" value="INTRLEUKIN1X"/>
</dbReference>
<dbReference type="SMART" id="SM00125">
    <property type="entry name" value="IL1"/>
    <property type="match status" value="1"/>
</dbReference>
<dbReference type="SUPFAM" id="SSF50353">
    <property type="entry name" value="Cytokine"/>
    <property type="match status" value="1"/>
</dbReference>
<dbReference type="PROSITE" id="PS00253">
    <property type="entry name" value="INTERLEUKIN_1"/>
    <property type="match status" value="1"/>
</dbReference>
<feature type="signal peptide" evidence="1">
    <location>
        <begin position="1"/>
        <end position="26"/>
    </location>
</feature>
<feature type="chain" id="PRO_0000015333" description="Interleukin-1 receptor antagonist protein">
    <location>
        <begin position="27"/>
        <end position="178"/>
    </location>
</feature>
<feature type="glycosylation site" description="N-linked (GlcNAc...) asparagine" evidence="4">
    <location>
        <position position="110"/>
    </location>
</feature>
<feature type="disulfide bond" evidence="1">
    <location>
        <begin position="92"/>
        <end position="142"/>
    </location>
</feature>
<sequence length="178" mass="20282">MEICRGPYSHLISLLLILLFRSESAGHPAGKRPCKMQAFRIWDTNQKTFYLRNNQLIAGYLQGPNTKLEEKIDMVPIDFRNVFLGIHGGKLCLSCVKSGDDTKLQLEEVNITDLNKNKEEDKRFTFIRSETGPTTSFESLACPGWFLCTTLEADHPVSLTNTPKEPCTVTKFYFQEDQ</sequence>
<comment type="function">
    <text evidence="3">Anti-inflammatory antagonist of interleukin-1 family of proinflammatory cytokines such as interleukin-1beta/IL1B and interleukin-1alpha/IL1A. Protects from immune dysregulation and uncontrolled systemic inflammation triggered by IL1 for a range of innate stimulatory agents such as pathogens.</text>
</comment>
<comment type="subcellular location">
    <subcellularLocation>
        <location evidence="2">Secreted</location>
    </subcellularLocation>
</comment>
<comment type="similarity">
    <text evidence="5">Belongs to the IL-1 family.</text>
</comment>